<evidence type="ECO:0000255" key="1">
    <source>
        <dbReference type="HAMAP-Rule" id="MF_01365"/>
    </source>
</evidence>
<evidence type="ECO:0000305" key="2"/>
<feature type="chain" id="PRO_1000073406" description="Large ribosomal subunit protein uL6">
    <location>
        <begin position="1"/>
        <end position="177"/>
    </location>
</feature>
<gene>
    <name evidence="1" type="primary">rplF</name>
    <name type="ordered locus">Plav_2751</name>
</gene>
<reference key="1">
    <citation type="journal article" date="2011" name="Stand. Genomic Sci.">
        <title>Complete genome sequence of Parvibaculum lavamentivorans type strain (DS-1(T)).</title>
        <authorList>
            <person name="Schleheck D."/>
            <person name="Weiss M."/>
            <person name="Pitluck S."/>
            <person name="Bruce D."/>
            <person name="Land M.L."/>
            <person name="Han S."/>
            <person name="Saunders E."/>
            <person name="Tapia R."/>
            <person name="Detter C."/>
            <person name="Brettin T."/>
            <person name="Han J."/>
            <person name="Woyke T."/>
            <person name="Goodwin L."/>
            <person name="Pennacchio L."/>
            <person name="Nolan M."/>
            <person name="Cook A.M."/>
            <person name="Kjelleberg S."/>
            <person name="Thomas T."/>
        </authorList>
    </citation>
    <scope>NUCLEOTIDE SEQUENCE [LARGE SCALE GENOMIC DNA]</scope>
    <source>
        <strain>DS-1 / DSM 13023 / NCIMB 13966</strain>
    </source>
</reference>
<accession>A7HWS6</accession>
<protein>
    <recommendedName>
        <fullName evidence="1">Large ribosomal subunit protein uL6</fullName>
    </recommendedName>
    <alternativeName>
        <fullName evidence="2">50S ribosomal protein L6</fullName>
    </alternativeName>
</protein>
<dbReference type="EMBL" id="CP000774">
    <property type="protein sequence ID" value="ABS64359.1"/>
    <property type="molecule type" value="Genomic_DNA"/>
</dbReference>
<dbReference type="RefSeq" id="WP_012111673.1">
    <property type="nucleotide sequence ID" value="NC_009719.1"/>
</dbReference>
<dbReference type="SMR" id="A7HWS6"/>
<dbReference type="STRING" id="402881.Plav_2751"/>
<dbReference type="KEGG" id="pla:Plav_2751"/>
<dbReference type="eggNOG" id="COG0097">
    <property type="taxonomic scope" value="Bacteria"/>
</dbReference>
<dbReference type="HOGENOM" id="CLU_065464_1_2_5"/>
<dbReference type="OrthoDB" id="9805007at2"/>
<dbReference type="Proteomes" id="UP000006377">
    <property type="component" value="Chromosome"/>
</dbReference>
<dbReference type="GO" id="GO:0022625">
    <property type="term" value="C:cytosolic large ribosomal subunit"/>
    <property type="evidence" value="ECO:0007669"/>
    <property type="project" value="TreeGrafter"/>
</dbReference>
<dbReference type="GO" id="GO:0019843">
    <property type="term" value="F:rRNA binding"/>
    <property type="evidence" value="ECO:0007669"/>
    <property type="project" value="UniProtKB-UniRule"/>
</dbReference>
<dbReference type="GO" id="GO:0003735">
    <property type="term" value="F:structural constituent of ribosome"/>
    <property type="evidence" value="ECO:0007669"/>
    <property type="project" value="InterPro"/>
</dbReference>
<dbReference type="GO" id="GO:0002181">
    <property type="term" value="P:cytoplasmic translation"/>
    <property type="evidence" value="ECO:0007669"/>
    <property type="project" value="TreeGrafter"/>
</dbReference>
<dbReference type="FunFam" id="3.90.930.12:FF:000001">
    <property type="entry name" value="50S ribosomal protein L6"/>
    <property type="match status" value="1"/>
</dbReference>
<dbReference type="FunFam" id="3.90.930.12:FF:000002">
    <property type="entry name" value="50S ribosomal protein L6"/>
    <property type="match status" value="1"/>
</dbReference>
<dbReference type="Gene3D" id="3.90.930.12">
    <property type="entry name" value="Ribosomal protein L6, alpha-beta domain"/>
    <property type="match status" value="2"/>
</dbReference>
<dbReference type="HAMAP" id="MF_01365_B">
    <property type="entry name" value="Ribosomal_uL6_B"/>
    <property type="match status" value="1"/>
</dbReference>
<dbReference type="InterPro" id="IPR000702">
    <property type="entry name" value="Ribosomal_uL6-like"/>
</dbReference>
<dbReference type="InterPro" id="IPR036789">
    <property type="entry name" value="Ribosomal_uL6-like_a/b-dom_sf"/>
</dbReference>
<dbReference type="InterPro" id="IPR020040">
    <property type="entry name" value="Ribosomal_uL6_a/b-dom"/>
</dbReference>
<dbReference type="InterPro" id="IPR019906">
    <property type="entry name" value="Ribosomal_uL6_bac-type"/>
</dbReference>
<dbReference type="InterPro" id="IPR002358">
    <property type="entry name" value="Ribosomal_uL6_CS"/>
</dbReference>
<dbReference type="NCBIfam" id="TIGR03654">
    <property type="entry name" value="L6_bact"/>
    <property type="match status" value="1"/>
</dbReference>
<dbReference type="PANTHER" id="PTHR11655">
    <property type="entry name" value="60S/50S RIBOSOMAL PROTEIN L6/L9"/>
    <property type="match status" value="1"/>
</dbReference>
<dbReference type="PANTHER" id="PTHR11655:SF14">
    <property type="entry name" value="LARGE RIBOSOMAL SUBUNIT PROTEIN UL6M"/>
    <property type="match status" value="1"/>
</dbReference>
<dbReference type="Pfam" id="PF00347">
    <property type="entry name" value="Ribosomal_L6"/>
    <property type="match status" value="2"/>
</dbReference>
<dbReference type="PIRSF" id="PIRSF002162">
    <property type="entry name" value="Ribosomal_L6"/>
    <property type="match status" value="1"/>
</dbReference>
<dbReference type="PRINTS" id="PR00059">
    <property type="entry name" value="RIBOSOMALL6"/>
</dbReference>
<dbReference type="SUPFAM" id="SSF56053">
    <property type="entry name" value="Ribosomal protein L6"/>
    <property type="match status" value="2"/>
</dbReference>
<dbReference type="PROSITE" id="PS00525">
    <property type="entry name" value="RIBOSOMAL_L6_1"/>
    <property type="match status" value="1"/>
</dbReference>
<keyword id="KW-1185">Reference proteome</keyword>
<keyword id="KW-0687">Ribonucleoprotein</keyword>
<keyword id="KW-0689">Ribosomal protein</keyword>
<keyword id="KW-0694">RNA-binding</keyword>
<keyword id="KW-0699">rRNA-binding</keyword>
<comment type="function">
    <text evidence="1">This protein binds to the 23S rRNA, and is important in its secondary structure. It is located near the subunit interface in the base of the L7/L12 stalk, and near the tRNA binding site of the peptidyltransferase center.</text>
</comment>
<comment type="subunit">
    <text evidence="1">Part of the 50S ribosomal subunit.</text>
</comment>
<comment type="similarity">
    <text evidence="1">Belongs to the universal ribosomal protein uL6 family.</text>
</comment>
<proteinExistence type="inferred from homology"/>
<name>RL6_PARL1</name>
<sequence>MSRIGKYPVEVPKGVTVTLNGQDLAVKGPKGELKLTLVDDVTVEQGESGLKVAPREDTQRARAMWGLSRTLVKNIVTGVTDGFTKTLEINGVGYRAAIQGKNLQLNLGFSHDVLYPIPEGIDIKCTKPTEIVITGIDKQKVGQVAAEIRGYRGPEPYKGKGVKYAGEYIFRKEGKKK</sequence>
<organism>
    <name type="scientific">Parvibaculum lavamentivorans (strain DS-1 / DSM 13023 / NCIMB 13966)</name>
    <dbReference type="NCBI Taxonomy" id="402881"/>
    <lineage>
        <taxon>Bacteria</taxon>
        <taxon>Pseudomonadati</taxon>
        <taxon>Pseudomonadota</taxon>
        <taxon>Alphaproteobacteria</taxon>
        <taxon>Hyphomicrobiales</taxon>
        <taxon>Parvibaculaceae</taxon>
        <taxon>Parvibaculum</taxon>
    </lineage>
</organism>